<gene>
    <name type="primary">ANKK1</name>
    <name type="synonym">PKK2</name>
    <name type="synonym">SGK288</name>
</gene>
<evidence type="ECO:0000255" key="1">
    <source>
        <dbReference type="PROSITE-ProRule" id="PRU00159"/>
    </source>
</evidence>
<evidence type="ECO:0000255" key="2">
    <source>
        <dbReference type="PROSITE-ProRule" id="PRU10027"/>
    </source>
</evidence>
<evidence type="ECO:0000269" key="3">
    <source>
    </source>
</evidence>
<evidence type="ECO:0000269" key="4">
    <source>
    </source>
</evidence>
<evidence type="ECO:0000269" key="5">
    <source>
    </source>
</evidence>
<evidence type="ECO:0000305" key="6"/>
<proteinExistence type="evidence at protein level"/>
<sequence>MAADPTELRLGSLPVFTRDDFEGDWRLVASGGFSQVFQARHRRWRTEYAIKCAPCLPPDAASSDVNYLIEEAAKMKKIKFQHIVSIYGVCKQPLGIVMEFMANGSLEKVLSTHSLCWKLRFRIIHETSLAMNFLHSIKPPLLHLDLKPGNILLDSNMHVKISDFGLSKWMEQSTRMQYIERSALRGMLSYIPPEMFLESNKAPGPKYDVYSFAIVIWELLTQKKPYSGFNMMMIIIRVAAGMRPSLQPVSDQWPSEAQQMVDLMKRCWDQDPKKRPCFLDITIETDILLSLLQSRVAVPESKALARKVSCKLSLRQPGEVNEDISQELMDSDSGNYLKRALQLSDRKNLVPRDEELCIYENKVTPLHFLVAQGSVEQVRLLLAHEVDVDCQTASGYTPLLIAAQDQQPDLCALLLAHGADANRVDEDGWAPLHFAAQNGDDGTARLLLDHGACVDAQEREGWTPLHLAAQNNFENVARLLVSRQADPNLHEAEGKTPLHVAAYFGHVSLVKLLTSQGAELDAQQRNLRTPLHLAVERGKVRAIQHLLKSGAVPDALDQSGYGPLHTAAARGKYLICKMLLRYGASLELPTHQGWTPLHLAAYKGHLEIIHLLAESHANMGALGAVNWTPLHLAARHGEEAVVSALLQCGADPNAAEQSGWTPLHLAVQRSTFLSVINLLEHHANVHARNKVGWTPAHLAALKGNTAILKVLVEAGAQLDVQDGVSCTPLQLALRSRKQGIMSFLEGKEPSVATLGGSKPGAEMEI</sequence>
<dbReference type="EC" id="2.7.11.1"/>
<dbReference type="EMBL" id="AJ541797">
    <property type="protein sequence ID" value="CAD62569.2"/>
    <property type="molecule type" value="mRNA"/>
</dbReference>
<dbReference type="EMBL" id="AF487542">
    <property type="protein sequence ID" value="AAQ09005.1"/>
    <property type="molecule type" value="mRNA"/>
</dbReference>
<dbReference type="EMBL" id="AF525298">
    <property type="protein sequence ID" value="AAM91924.1"/>
    <property type="molecule type" value="Genomic_DNA"/>
</dbReference>
<dbReference type="CCDS" id="CCDS44734.1"/>
<dbReference type="RefSeq" id="NP_848605.1">
    <property type="nucleotide sequence ID" value="NM_178510.2"/>
</dbReference>
<dbReference type="SMR" id="Q8NFD2"/>
<dbReference type="BioGRID" id="129088">
    <property type="interactions" value="30"/>
</dbReference>
<dbReference type="FunCoup" id="Q8NFD2">
    <property type="interactions" value="322"/>
</dbReference>
<dbReference type="IntAct" id="Q8NFD2">
    <property type="interactions" value="28"/>
</dbReference>
<dbReference type="STRING" id="9606.ENSP00000306678"/>
<dbReference type="BindingDB" id="Q8NFD2"/>
<dbReference type="ChEMBL" id="CHEMBL5547"/>
<dbReference type="DrugBank" id="DB12010">
    <property type="generic name" value="Fostamatinib"/>
</dbReference>
<dbReference type="DrugCentral" id="Q8NFD2"/>
<dbReference type="GlyGen" id="Q8NFD2">
    <property type="glycosylation" value="1 site"/>
</dbReference>
<dbReference type="iPTMnet" id="Q8NFD2"/>
<dbReference type="PhosphoSitePlus" id="Q8NFD2"/>
<dbReference type="BioMuta" id="ANKK1"/>
<dbReference type="DMDM" id="74762569"/>
<dbReference type="jPOST" id="Q8NFD2"/>
<dbReference type="MassIVE" id="Q8NFD2"/>
<dbReference type="PaxDb" id="9606-ENSP00000306678"/>
<dbReference type="PeptideAtlas" id="Q8NFD2"/>
<dbReference type="Antibodypedia" id="2098">
    <property type="antibodies" value="109 antibodies from 28 providers"/>
</dbReference>
<dbReference type="DNASU" id="255239"/>
<dbReference type="Ensembl" id="ENST00000303941.4">
    <property type="protein sequence ID" value="ENSP00000306678.3"/>
    <property type="gene ID" value="ENSG00000170209.5"/>
</dbReference>
<dbReference type="GeneID" id="255239"/>
<dbReference type="KEGG" id="hsa:255239"/>
<dbReference type="MANE-Select" id="ENST00000303941.4">
    <property type="protein sequence ID" value="ENSP00000306678.3"/>
    <property type="RefSeq nucleotide sequence ID" value="NM_178510.2"/>
    <property type="RefSeq protein sequence ID" value="NP_848605.1"/>
</dbReference>
<dbReference type="UCSC" id="uc001pny.3">
    <property type="organism name" value="human"/>
</dbReference>
<dbReference type="AGR" id="HGNC:21027"/>
<dbReference type="CTD" id="255239"/>
<dbReference type="DisGeNET" id="255239"/>
<dbReference type="GeneCards" id="ANKK1"/>
<dbReference type="HGNC" id="HGNC:21027">
    <property type="gene designation" value="ANKK1"/>
</dbReference>
<dbReference type="HPA" id="ENSG00000170209">
    <property type="expression patterns" value="Tissue enhanced (skin)"/>
</dbReference>
<dbReference type="MIM" id="608774">
    <property type="type" value="gene"/>
</dbReference>
<dbReference type="neXtProt" id="NX_Q8NFD2"/>
<dbReference type="OpenTargets" id="ENSG00000170209"/>
<dbReference type="PharmGKB" id="PA134872551"/>
<dbReference type="VEuPathDB" id="HostDB:ENSG00000170209"/>
<dbReference type="eggNOG" id="KOG0192">
    <property type="taxonomic scope" value="Eukaryota"/>
</dbReference>
<dbReference type="GeneTree" id="ENSGT00940000162060"/>
<dbReference type="HOGENOM" id="CLU_015188_1_0_1"/>
<dbReference type="InParanoid" id="Q8NFD2"/>
<dbReference type="OMA" id="PTHQGWT"/>
<dbReference type="OrthoDB" id="195446at2759"/>
<dbReference type="PAN-GO" id="Q8NFD2">
    <property type="GO annotations" value="2 GO annotations based on evolutionary models"/>
</dbReference>
<dbReference type="PhylomeDB" id="Q8NFD2"/>
<dbReference type="TreeFam" id="TF106506"/>
<dbReference type="PathwayCommons" id="Q8NFD2"/>
<dbReference type="SignaLink" id="Q8NFD2"/>
<dbReference type="BioGRID-ORCS" id="255239">
    <property type="hits" value="9 hits in 1177 CRISPR screens"/>
</dbReference>
<dbReference type="GeneWiki" id="ANKK1"/>
<dbReference type="GenomeRNAi" id="255239"/>
<dbReference type="Pharos" id="Q8NFD2">
    <property type="development level" value="Tbio"/>
</dbReference>
<dbReference type="PRO" id="PR:Q8NFD2"/>
<dbReference type="Proteomes" id="UP000005640">
    <property type="component" value="Chromosome 11"/>
</dbReference>
<dbReference type="RNAct" id="Q8NFD2">
    <property type="molecule type" value="protein"/>
</dbReference>
<dbReference type="Bgee" id="ENSG00000170209">
    <property type="expression patterns" value="Expressed in right uterine tube and 86 other cell types or tissues"/>
</dbReference>
<dbReference type="ExpressionAtlas" id="Q8NFD2">
    <property type="expression patterns" value="baseline and differential"/>
</dbReference>
<dbReference type="GO" id="GO:0042995">
    <property type="term" value="C:cell projection"/>
    <property type="evidence" value="ECO:0007669"/>
    <property type="project" value="Ensembl"/>
</dbReference>
<dbReference type="GO" id="GO:0005737">
    <property type="term" value="C:cytoplasm"/>
    <property type="evidence" value="ECO:0000318"/>
    <property type="project" value="GO_Central"/>
</dbReference>
<dbReference type="GO" id="GO:0005634">
    <property type="term" value="C:nucleus"/>
    <property type="evidence" value="ECO:0000314"/>
    <property type="project" value="MGI"/>
</dbReference>
<dbReference type="GO" id="GO:0005524">
    <property type="term" value="F:ATP binding"/>
    <property type="evidence" value="ECO:0007669"/>
    <property type="project" value="UniProtKB-KW"/>
</dbReference>
<dbReference type="GO" id="GO:0106310">
    <property type="term" value="F:protein serine kinase activity"/>
    <property type="evidence" value="ECO:0007669"/>
    <property type="project" value="RHEA"/>
</dbReference>
<dbReference type="GO" id="GO:0004674">
    <property type="term" value="F:protein serine/threonine kinase activity"/>
    <property type="evidence" value="ECO:0007669"/>
    <property type="project" value="UniProtKB-KW"/>
</dbReference>
<dbReference type="GO" id="GO:0071300">
    <property type="term" value="P:cellular response to retinoic acid"/>
    <property type="evidence" value="ECO:0007669"/>
    <property type="project" value="Ensembl"/>
</dbReference>
<dbReference type="GO" id="GO:0010564">
    <property type="term" value="P:regulation of cell cycle process"/>
    <property type="evidence" value="ECO:0000314"/>
    <property type="project" value="MGI"/>
</dbReference>
<dbReference type="CDD" id="cd14025">
    <property type="entry name" value="STKc_RIP4_like"/>
    <property type="match status" value="1"/>
</dbReference>
<dbReference type="Gene3D" id="1.25.40.20">
    <property type="entry name" value="Ankyrin repeat-containing domain"/>
    <property type="match status" value="5"/>
</dbReference>
<dbReference type="Gene3D" id="1.10.510.10">
    <property type="entry name" value="Transferase(Phosphotransferase) domain 1"/>
    <property type="match status" value="1"/>
</dbReference>
<dbReference type="InterPro" id="IPR002110">
    <property type="entry name" value="Ankyrin_rpt"/>
</dbReference>
<dbReference type="InterPro" id="IPR036770">
    <property type="entry name" value="Ankyrin_rpt-contain_sf"/>
</dbReference>
<dbReference type="InterPro" id="IPR011009">
    <property type="entry name" value="Kinase-like_dom_sf"/>
</dbReference>
<dbReference type="InterPro" id="IPR000719">
    <property type="entry name" value="Prot_kinase_dom"/>
</dbReference>
<dbReference type="InterPro" id="IPR001245">
    <property type="entry name" value="Ser-Thr/Tyr_kinase_cat_dom"/>
</dbReference>
<dbReference type="InterPro" id="IPR008271">
    <property type="entry name" value="Ser/Thr_kinase_AS"/>
</dbReference>
<dbReference type="PANTHER" id="PTHR24198">
    <property type="entry name" value="ANKYRIN REPEAT AND PROTEIN KINASE DOMAIN-CONTAINING PROTEIN"/>
    <property type="match status" value="1"/>
</dbReference>
<dbReference type="PANTHER" id="PTHR24198:SF175">
    <property type="entry name" value="ANKYRIN REPEAT AND PROTEIN KINASE DOMAIN-CONTAINING PROTEIN 1"/>
    <property type="match status" value="1"/>
</dbReference>
<dbReference type="Pfam" id="PF00023">
    <property type="entry name" value="Ank"/>
    <property type="match status" value="2"/>
</dbReference>
<dbReference type="Pfam" id="PF12796">
    <property type="entry name" value="Ank_2"/>
    <property type="match status" value="3"/>
</dbReference>
<dbReference type="Pfam" id="PF13637">
    <property type="entry name" value="Ank_4"/>
    <property type="match status" value="1"/>
</dbReference>
<dbReference type="Pfam" id="PF07714">
    <property type="entry name" value="PK_Tyr_Ser-Thr"/>
    <property type="match status" value="1"/>
</dbReference>
<dbReference type="PRINTS" id="PR01415">
    <property type="entry name" value="ANKYRIN"/>
</dbReference>
<dbReference type="SMART" id="SM00248">
    <property type="entry name" value="ANK"/>
    <property type="match status" value="11"/>
</dbReference>
<dbReference type="SMART" id="SM00220">
    <property type="entry name" value="S_TKc"/>
    <property type="match status" value="1"/>
</dbReference>
<dbReference type="SUPFAM" id="SSF48403">
    <property type="entry name" value="Ankyrin repeat"/>
    <property type="match status" value="1"/>
</dbReference>
<dbReference type="SUPFAM" id="SSF56112">
    <property type="entry name" value="Protein kinase-like (PK-like)"/>
    <property type="match status" value="1"/>
</dbReference>
<dbReference type="PROSITE" id="PS50297">
    <property type="entry name" value="ANK_REP_REGION"/>
    <property type="match status" value="1"/>
</dbReference>
<dbReference type="PROSITE" id="PS50088">
    <property type="entry name" value="ANK_REPEAT"/>
    <property type="match status" value="11"/>
</dbReference>
<dbReference type="PROSITE" id="PS50011">
    <property type="entry name" value="PROTEIN_KINASE_DOM"/>
    <property type="match status" value="1"/>
</dbReference>
<dbReference type="PROSITE" id="PS00108">
    <property type="entry name" value="PROTEIN_KINASE_ST"/>
    <property type="match status" value="1"/>
</dbReference>
<reference key="1">
    <citation type="journal article" date="2004" name="Hum. Mutat.">
        <title>Identification and characterization of ANKK1: a novel kinase gene closely linked to DRD2 on chromosome band 11q23.1.</title>
        <authorList>
            <person name="Neville M.J."/>
            <person name="Johnstone E.C."/>
            <person name="Walton R.T."/>
        </authorList>
    </citation>
    <scope>NUCLEOTIDE SEQUENCE [MRNA]</scope>
    <scope>TISSUE SPECIFICITY</scope>
</reference>
<reference key="2">
    <citation type="submission" date="2002-02" db="EMBL/GenBank/DDBJ databases">
        <authorList>
            <person name="Inohara N."/>
        </authorList>
    </citation>
    <scope>NUCLEOTIDE SEQUENCE [MRNA]</scope>
</reference>
<reference key="3">
    <citation type="journal article" date="2004" name="Schizophr. Res.">
        <title>The 3' region of the DRD2 gene is involved in genetic susceptibility to schizophrenia.</title>
        <authorList>
            <person name="Dubertret C."/>
            <person name="Gouya L."/>
            <person name="Hanoun N."/>
            <person name="Deybach J.-C."/>
            <person name="Ades J."/>
            <person name="Hamon M."/>
            <person name="Gorwood P."/>
        </authorList>
    </citation>
    <scope>NUCLEOTIDE SEQUENCE [GENOMIC DNA]</scope>
    <scope>TISSUE SPECIFICITY</scope>
    <scope>VARIANT LYS-713</scope>
</reference>
<reference key="4">
    <citation type="journal article" date="2002" name="Science">
        <title>The protein kinase complement of the human genome.</title>
        <authorList>
            <person name="Manning G."/>
            <person name="Whyte D.B."/>
            <person name="Martinez R."/>
            <person name="Hunter T."/>
            <person name="Sudarsanam S."/>
        </authorList>
    </citation>
    <scope>IDENTIFICATION</scope>
</reference>
<reference key="5">
    <citation type="journal article" date="2007" name="Nature">
        <title>Patterns of somatic mutation in human cancer genomes.</title>
        <authorList>
            <person name="Greenman C."/>
            <person name="Stephens P."/>
            <person name="Smith R."/>
            <person name="Dalgliesh G.L."/>
            <person name="Hunter C."/>
            <person name="Bignell G."/>
            <person name="Davies H."/>
            <person name="Teague J."/>
            <person name="Butler A."/>
            <person name="Stevens C."/>
            <person name="Edkins S."/>
            <person name="O'Meara S."/>
            <person name="Vastrik I."/>
            <person name="Schmidt E.E."/>
            <person name="Avis T."/>
            <person name="Barthorpe S."/>
            <person name="Bhamra G."/>
            <person name="Buck G."/>
            <person name="Choudhury B."/>
            <person name="Clements J."/>
            <person name="Cole J."/>
            <person name="Dicks E."/>
            <person name="Forbes S."/>
            <person name="Gray K."/>
            <person name="Halliday K."/>
            <person name="Harrison R."/>
            <person name="Hills K."/>
            <person name="Hinton J."/>
            <person name="Jenkinson A."/>
            <person name="Jones D."/>
            <person name="Menzies A."/>
            <person name="Mironenko T."/>
            <person name="Perry J."/>
            <person name="Raine K."/>
            <person name="Richardson D."/>
            <person name="Shepherd R."/>
            <person name="Small A."/>
            <person name="Tofts C."/>
            <person name="Varian J."/>
            <person name="Webb T."/>
            <person name="West S."/>
            <person name="Widaa S."/>
            <person name="Yates A."/>
            <person name="Cahill D.P."/>
            <person name="Louis D.N."/>
            <person name="Goldstraw P."/>
            <person name="Nicholson A.G."/>
            <person name="Brasseur F."/>
            <person name="Looijenga L."/>
            <person name="Weber B.L."/>
            <person name="Chiew Y.-E."/>
            <person name="DeFazio A."/>
            <person name="Greaves M.F."/>
            <person name="Green A.R."/>
            <person name="Campbell P."/>
            <person name="Birney E."/>
            <person name="Easton D.F."/>
            <person name="Chenevix-Trench G."/>
            <person name="Tan M.-H."/>
            <person name="Khoo S.K."/>
            <person name="Teh B.T."/>
            <person name="Yuen S.T."/>
            <person name="Leung S.Y."/>
            <person name="Wooster R."/>
            <person name="Futreal P.A."/>
            <person name="Stratton M.R."/>
        </authorList>
    </citation>
    <scope>VARIANTS [LARGE SCALE ANALYSIS] TYR-4; HIS-122; THR-239; LEU-276; ARG-318; THR-347; PHE-366; GLN-367; LYS-376; LYS-426; ARG-442; ARG-451; ARG-490; ILE-595; LEU-596; SER-653; GLY-670; LYS-713; LEU-717; LEU-736 AND LYS-764</scope>
</reference>
<protein>
    <recommendedName>
        <fullName>Ankyrin repeat and protein kinase domain-containing protein 1</fullName>
        <ecNumber>2.7.11.1</ecNumber>
    </recommendedName>
    <alternativeName>
        <fullName>Protein kinase PKK2</fullName>
    </alternativeName>
    <alternativeName>
        <fullName>Sugen kinase 288</fullName>
        <shortName>SgK288</shortName>
    </alternativeName>
    <alternativeName>
        <fullName>X-kinase</fullName>
    </alternativeName>
</protein>
<comment type="catalytic activity">
    <reaction>
        <text>L-seryl-[protein] + ATP = O-phospho-L-seryl-[protein] + ADP + H(+)</text>
        <dbReference type="Rhea" id="RHEA:17989"/>
        <dbReference type="Rhea" id="RHEA-COMP:9863"/>
        <dbReference type="Rhea" id="RHEA-COMP:11604"/>
        <dbReference type="ChEBI" id="CHEBI:15378"/>
        <dbReference type="ChEBI" id="CHEBI:29999"/>
        <dbReference type="ChEBI" id="CHEBI:30616"/>
        <dbReference type="ChEBI" id="CHEBI:83421"/>
        <dbReference type="ChEBI" id="CHEBI:456216"/>
        <dbReference type="EC" id="2.7.11.1"/>
    </reaction>
</comment>
<comment type="catalytic activity">
    <reaction>
        <text>L-threonyl-[protein] + ATP = O-phospho-L-threonyl-[protein] + ADP + H(+)</text>
        <dbReference type="Rhea" id="RHEA:46608"/>
        <dbReference type="Rhea" id="RHEA-COMP:11060"/>
        <dbReference type="Rhea" id="RHEA-COMP:11605"/>
        <dbReference type="ChEBI" id="CHEBI:15378"/>
        <dbReference type="ChEBI" id="CHEBI:30013"/>
        <dbReference type="ChEBI" id="CHEBI:30616"/>
        <dbReference type="ChEBI" id="CHEBI:61977"/>
        <dbReference type="ChEBI" id="CHEBI:456216"/>
        <dbReference type="EC" id="2.7.11.1"/>
    </reaction>
</comment>
<comment type="interaction">
    <interactant intactId="EBI-13280688">
        <id>Q8NFD2</id>
    </interactant>
    <interactant intactId="EBI-2808472">
        <id>Q99622</id>
        <label>C12orf57</label>
    </interactant>
    <organismsDiffer>false</organismsDiffer>
    <experiments>3</experiments>
</comment>
<comment type="interaction">
    <interactant intactId="EBI-13280688">
        <id>Q8NFD2</id>
    </interactant>
    <interactant intactId="EBI-739879">
        <id>Q53TS8</id>
        <label>C2CD6</label>
    </interactant>
    <organismsDiffer>false</organismsDiffer>
    <experiments>3</experiments>
</comment>
<comment type="interaction">
    <interactant intactId="EBI-13280688">
        <id>Q8NFD2</id>
    </interactant>
    <interactant intactId="EBI-718947">
        <id>P15882</id>
        <label>CHN1</label>
    </interactant>
    <organismsDiffer>false</organismsDiffer>
    <experiments>3</experiments>
</comment>
<comment type="interaction">
    <interactant intactId="EBI-13280688">
        <id>Q8NFD2</id>
    </interactant>
    <interactant intactId="EBI-714925">
        <id>P52757</id>
        <label>CHN2</label>
    </interactant>
    <organismsDiffer>false</organismsDiffer>
    <experiments>3</experiments>
</comment>
<comment type="interaction">
    <interactant intactId="EBI-13280688">
        <id>Q8NFD2</id>
    </interactant>
    <interactant intactId="EBI-745632">
        <id>Q9NWT6</id>
        <label>HIF1AN</label>
    </interactant>
    <organismsDiffer>false</organismsDiffer>
    <experiments>6</experiments>
</comment>
<comment type="interaction">
    <interactant intactId="EBI-13280688">
        <id>Q8NFD2</id>
    </interactant>
    <interactant intactId="EBI-399269">
        <id>O95619</id>
        <label>YEATS4</label>
    </interactant>
    <organismsDiffer>false</organismsDiffer>
    <experiments>4</experiments>
</comment>
<comment type="tissue specificity">
    <text evidence="3 4">Highly expressed in brain and weakly expressed in placenta and spinal cord.</text>
</comment>
<comment type="similarity">
    <text evidence="6">Belongs to the protein kinase superfamily. TKL Ser/Thr protein kinase family.</text>
</comment>
<organism>
    <name type="scientific">Homo sapiens</name>
    <name type="common">Human</name>
    <dbReference type="NCBI Taxonomy" id="9606"/>
    <lineage>
        <taxon>Eukaryota</taxon>
        <taxon>Metazoa</taxon>
        <taxon>Chordata</taxon>
        <taxon>Craniata</taxon>
        <taxon>Vertebrata</taxon>
        <taxon>Euteleostomi</taxon>
        <taxon>Mammalia</taxon>
        <taxon>Eutheria</taxon>
        <taxon>Euarchontoglires</taxon>
        <taxon>Primates</taxon>
        <taxon>Haplorrhini</taxon>
        <taxon>Catarrhini</taxon>
        <taxon>Hominidae</taxon>
        <taxon>Homo</taxon>
    </lineage>
</organism>
<keyword id="KW-0040">ANK repeat</keyword>
<keyword id="KW-0067">ATP-binding</keyword>
<keyword id="KW-0418">Kinase</keyword>
<keyword id="KW-0547">Nucleotide-binding</keyword>
<keyword id="KW-1267">Proteomics identification</keyword>
<keyword id="KW-1185">Reference proteome</keyword>
<keyword id="KW-0677">Repeat</keyword>
<keyword id="KW-0723">Serine/threonine-protein kinase</keyword>
<keyword id="KW-0808">Transferase</keyword>
<accession>Q8NFD2</accession>
<feature type="chain" id="PRO_0000085620" description="Ankyrin repeat and protein kinase domain-containing protein 1">
    <location>
        <begin position="1"/>
        <end position="765"/>
    </location>
</feature>
<feature type="domain" description="Protein kinase" evidence="1">
    <location>
        <begin position="22"/>
        <end position="289"/>
    </location>
</feature>
<feature type="repeat" description="ANK 1">
    <location>
        <begin position="361"/>
        <end position="390"/>
    </location>
</feature>
<feature type="repeat" description="ANK 2">
    <location>
        <begin position="394"/>
        <end position="423"/>
    </location>
</feature>
<feature type="repeat" description="ANK 3">
    <location>
        <begin position="427"/>
        <end position="456"/>
    </location>
</feature>
<feature type="repeat" description="ANK 4">
    <location>
        <begin position="460"/>
        <end position="489"/>
    </location>
</feature>
<feature type="repeat" description="ANK 5">
    <location>
        <begin position="493"/>
        <end position="522"/>
    </location>
</feature>
<feature type="repeat" description="ANK 6">
    <location>
        <begin position="526"/>
        <end position="555"/>
    </location>
</feature>
<feature type="repeat" description="ANK 7">
    <location>
        <begin position="559"/>
        <end position="588"/>
    </location>
</feature>
<feature type="repeat" description="ANK 8">
    <location>
        <begin position="592"/>
        <end position="621"/>
    </location>
</feature>
<feature type="repeat" description="ANK 9">
    <location>
        <begin position="625"/>
        <end position="654"/>
    </location>
</feature>
<feature type="repeat" description="ANK 10">
    <location>
        <begin position="658"/>
        <end position="687"/>
    </location>
</feature>
<feature type="repeat" description="ANK 11">
    <location>
        <begin position="691"/>
        <end position="720"/>
    </location>
</feature>
<feature type="repeat" description="ANK 12">
    <location>
        <begin position="724"/>
        <end position="753"/>
    </location>
</feature>
<feature type="active site" description="Proton acceptor" evidence="1 2">
    <location>
        <position position="145"/>
    </location>
</feature>
<feature type="binding site" evidence="1">
    <location>
        <begin position="28"/>
        <end position="36"/>
    </location>
    <ligand>
        <name>ATP</name>
        <dbReference type="ChEBI" id="CHEBI:30616"/>
    </ligand>
</feature>
<feature type="binding site" evidence="1">
    <location>
        <position position="51"/>
    </location>
    <ligand>
        <name>ATP</name>
        <dbReference type="ChEBI" id="CHEBI:30616"/>
    </ligand>
</feature>
<feature type="sequence variant" id="VAR_040359" description="In dbSNP:rs35657708." evidence="5">
    <original>D</original>
    <variation>Y</variation>
    <location>
        <position position="4"/>
    </location>
</feature>
<feature type="sequence variant" id="VAR_040360" description="In dbSNP:rs35877321." evidence="5">
    <original>R</original>
    <variation>H</variation>
    <location>
        <position position="122"/>
    </location>
</feature>
<feature type="sequence variant" id="VAR_036784" description="In dbSNP:rs7118900." evidence="5">
    <original>A</original>
    <variation>T</variation>
    <location>
        <position position="239"/>
    </location>
</feature>
<feature type="sequence variant" id="VAR_040361" description="In dbSNP:rs35488601." evidence="5">
    <original>P</original>
    <variation>L</variation>
    <location>
        <position position="276"/>
    </location>
</feature>
<feature type="sequence variant" id="VAR_036785" description="In dbSNP:rs11604671." evidence="5">
    <original>G</original>
    <variation>R</variation>
    <location>
        <position position="318"/>
    </location>
</feature>
<feature type="sequence variant" id="VAR_040362" description="In a breast infiltrating ductal carcinoma sample; somatic mutation." evidence="5">
    <original>K</original>
    <variation>T</variation>
    <location>
        <position position="347"/>
    </location>
</feature>
<feature type="sequence variant" id="VAR_040363" description="In dbSNP:rs56339158." evidence="5">
    <original>L</original>
    <variation>F</variation>
    <location>
        <position position="366"/>
    </location>
</feature>
<feature type="sequence variant" id="VAR_040364" description="In dbSNP:rs34298987." evidence="5">
    <original>H</original>
    <variation>Q</variation>
    <location>
        <position position="367"/>
    </location>
</feature>
<feature type="sequence variant" id="VAR_040365" description="In dbSNP:rs56299709." evidence="5">
    <original>E</original>
    <variation>K</variation>
    <location>
        <position position="376"/>
    </location>
</feature>
<feature type="sequence variant" id="VAR_040366" description="In dbSNP:rs55699907." evidence="5">
    <original>E</original>
    <variation>K</variation>
    <location>
        <position position="426"/>
    </location>
</feature>
<feature type="sequence variant" id="VAR_036786" description="In dbSNP:rs4938016." evidence="5">
    <original>G</original>
    <variation>R</variation>
    <location>
        <position position="442"/>
    </location>
</feature>
<feature type="sequence variant" id="VAR_040367" description="In dbSNP:rs34983219." evidence="5">
    <original>G</original>
    <variation>R</variation>
    <location>
        <position position="451"/>
    </location>
</feature>
<feature type="sequence variant" id="VAR_036787" description="In dbSNP:rs2734849." evidence="5">
    <original>H</original>
    <variation>R</variation>
    <location>
        <position position="490"/>
    </location>
</feature>
<feature type="sequence variant" id="VAR_040368" description="In dbSNP:rs55787008." evidence="5">
    <original>T</original>
    <variation>I</variation>
    <location>
        <position position="595"/>
    </location>
</feature>
<feature type="sequence variant" id="VAR_040369" description="In dbSNP:rs7104979." evidence="5">
    <original>P</original>
    <variation>L</variation>
    <location>
        <position position="596"/>
    </location>
</feature>
<feature type="sequence variant" id="VAR_040370" description="In dbSNP:rs55849504." evidence="5">
    <original>N</original>
    <variation>S</variation>
    <location>
        <position position="653"/>
    </location>
</feature>
<feature type="sequence variant" id="VAR_040371" description="In dbSNP:rs56006094." evidence="5">
    <original>S</original>
    <variation>G</variation>
    <location>
        <position position="670"/>
    </location>
</feature>
<feature type="sequence variant" id="VAR_025010" description="In dbSNP:rs1800497." evidence="3 5">
    <original>E</original>
    <variation>K</variation>
    <location>
        <position position="713"/>
    </location>
</feature>
<feature type="sequence variant" id="VAR_040372" description="In a lung large cell carcinoma sample; somatic mutation." evidence="5">
    <original>Q</original>
    <variation>L</variation>
    <location>
        <position position="717"/>
    </location>
</feature>
<feature type="sequence variant" id="VAR_040373" description="In a lung squamous cell carcinoma sample; somatic mutation." evidence="5">
    <original>R</original>
    <variation>L</variation>
    <location>
        <position position="736"/>
    </location>
</feature>
<feature type="sequence variant" id="VAR_040374" description="In a lung neuroendocrine carcinoma sample; somatic mutation." evidence="5">
    <original>E</original>
    <variation>K</variation>
    <location>
        <position position="764"/>
    </location>
</feature>
<name>ANKK1_HUMAN</name>